<organism>
    <name type="scientific">Drosophila melanogaster</name>
    <name type="common">Fruit fly</name>
    <dbReference type="NCBI Taxonomy" id="7227"/>
    <lineage>
        <taxon>Eukaryota</taxon>
        <taxon>Metazoa</taxon>
        <taxon>Ecdysozoa</taxon>
        <taxon>Arthropoda</taxon>
        <taxon>Hexapoda</taxon>
        <taxon>Insecta</taxon>
        <taxon>Pterygota</taxon>
        <taxon>Neoptera</taxon>
        <taxon>Endopterygota</taxon>
        <taxon>Diptera</taxon>
        <taxon>Brachycera</taxon>
        <taxon>Muscomorpha</taxon>
        <taxon>Ephydroidea</taxon>
        <taxon>Drosophilidae</taxon>
        <taxon>Drosophila</taxon>
        <taxon>Sophophora</taxon>
    </lineage>
</organism>
<protein>
    <recommendedName>
        <fullName>Protein nubbin</fullName>
    </recommendedName>
    <alternativeName>
        <fullName>POU domain protein 1</fullName>
        <shortName>PDM-1</shortName>
    </alternativeName>
    <alternativeName>
        <fullName>Protein twain</fullName>
    </alternativeName>
    <alternativeName>
        <fullName>dOCT1</fullName>
    </alternativeName>
    <alternativeName>
        <fullName>dPOU-19</fullName>
    </alternativeName>
</protein>
<gene>
    <name type="primary">nub</name>
    <name type="synonym">OCT1</name>
    <name type="synonym">pdm-1</name>
    <name type="synonym">POU-19</name>
    <name type="synonym">TWN</name>
    <name type="ORF">CG34395</name>
</gene>
<keyword id="KW-0217">Developmental protein</keyword>
<keyword id="KW-0238">DNA-binding</keyword>
<keyword id="KW-0371">Homeobox</keyword>
<keyword id="KW-0539">Nucleus</keyword>
<keyword id="KW-1185">Reference proteome</keyword>
<keyword id="KW-0804">Transcription</keyword>
<keyword id="KW-0805">Transcription regulation</keyword>
<evidence type="ECO:0000255" key="1">
    <source>
        <dbReference type="PROSITE-ProRule" id="PRU00108"/>
    </source>
</evidence>
<evidence type="ECO:0000255" key="2">
    <source>
        <dbReference type="PROSITE-ProRule" id="PRU00530"/>
    </source>
</evidence>
<evidence type="ECO:0000256" key="3">
    <source>
        <dbReference type="SAM" id="MobiDB-lite"/>
    </source>
</evidence>
<evidence type="ECO:0000269" key="4">
    <source>
    </source>
</evidence>
<evidence type="ECO:0000269" key="5">
    <source>
    </source>
</evidence>
<evidence type="ECO:0000269" key="6">
    <source>
    </source>
</evidence>
<evidence type="ECO:0000305" key="7"/>
<name>PDM1_DROME</name>
<comment type="function">
    <text evidence="4 5 6">DNA-binding regulatory protein implicated in early development. Involved in neuronal cell fate decision. Repressed directly or indirectly by the BX-C homeotic proteins.</text>
</comment>
<comment type="subcellular location">
    <subcellularLocation>
        <location evidence="1 2 6">Nucleus</location>
    </subcellularLocation>
</comment>
<comment type="tissue specificity">
    <text evidence="5 6">Initial expression in cellular blastoderm stage, then in ectodermal stripes during germband extension. Broad expression in the neuroectoderm followed by limitation to discrete subsets of CNS cells, and expression in specific PNS neurons and support cells.</text>
</comment>
<comment type="developmental stage">
    <text evidence="4 5 6">Expressed both maternally and zygotically.</text>
</comment>
<comment type="similarity">
    <text evidence="7">Belongs to the POU transcription factor family. Class-2 subfamily.</text>
</comment>
<sequence>MVMSELRWHTASPEDNKNSLKRDLLKSTPTSAREAAVHIMQNRYISRLSRSPSPLQSNASDCDDNNSSVGTSSDRCRSPLSPALSLSHQQAKRQLMSLQPHPAHHHHNPHHLNHLNHHQYKQEEDYDDANGGALNLTSDNSRHSTQSPSNSVKSATASPVPVISVPSPVPPMISPVLAPSGCGSTTPNSMAAAAAAAAAVASTMGSGISPLLALPGMSSPQAQLAAAGLGMNNPLLTGSLSPQDFAQFHQLLQQRQVALTQQFNSYMELLRSGSLGLAQDDPALTAQVAAAQFLMQSQLQALSQASQQLQALQKQQQRQVDEPLQLNHKMTQQPRSSTPHSIRSPIAIRSPASSPQQLHHHHHHPLQITPPSSAASLKLSGMLTPSTPTSGTQMSQGTTTPQPKTVASAAAARAAGEPSPEETTDLEELEQFAKTFKQRRIKLGFTQGDVGLAMGKLYGNDFSQTTISRFEALNLSFKNMCKLKPLLQKWLDDADRTIQATGGVFDPAALQATVSTPEIIGRRRKKRTSIETTIRGALEKAFLANQKPTSEEITQLADRLSMEKEVVRVWFCNRRQKEKRINPSLDSPTGADDDESSYMMH</sequence>
<feature type="chain" id="PRO_0000100777" description="Protein nubbin">
    <location>
        <begin position="1"/>
        <end position="601"/>
    </location>
</feature>
<feature type="domain" description="POU-specific" evidence="2">
    <location>
        <begin position="421"/>
        <end position="495"/>
    </location>
</feature>
<feature type="DNA-binding region" description="Homeobox" evidence="1">
    <location>
        <begin position="523"/>
        <end position="582"/>
    </location>
</feature>
<feature type="region of interest" description="Disordered" evidence="3">
    <location>
        <begin position="1"/>
        <end position="32"/>
    </location>
</feature>
<feature type="region of interest" description="Disordered" evidence="3">
    <location>
        <begin position="49"/>
        <end position="94"/>
    </location>
</feature>
<feature type="region of interest" description="Disordered" evidence="3">
    <location>
        <begin position="121"/>
        <end position="158"/>
    </location>
</feature>
<feature type="region of interest" description="Disordered" evidence="3">
    <location>
        <begin position="351"/>
        <end position="425"/>
    </location>
</feature>
<feature type="region of interest" description="Disordered" evidence="3">
    <location>
        <begin position="581"/>
        <end position="601"/>
    </location>
</feature>
<feature type="compositionally biased region" description="Basic and acidic residues" evidence="3">
    <location>
        <begin position="1"/>
        <end position="25"/>
    </location>
</feature>
<feature type="compositionally biased region" description="Low complexity" evidence="3">
    <location>
        <begin position="49"/>
        <end position="68"/>
    </location>
</feature>
<feature type="compositionally biased region" description="Polar residues" evidence="3">
    <location>
        <begin position="135"/>
        <end position="157"/>
    </location>
</feature>
<feature type="compositionally biased region" description="Low complexity" evidence="3">
    <location>
        <begin position="384"/>
        <end position="415"/>
    </location>
</feature>
<feature type="compositionally biased region" description="Acidic residues" evidence="3">
    <location>
        <begin position="591"/>
        <end position="601"/>
    </location>
</feature>
<feature type="sequence conflict" description="In Ref. 2; AAB21409." evidence="7" ref="2">
    <original>P</original>
    <variation>R</variation>
    <location>
        <position position="420"/>
    </location>
</feature>
<reference key="1">
    <citation type="journal article" date="1991" name="Mech. Dev.">
        <title>Isolation of a family of Drosophila POU domain genes expressed in early development.</title>
        <authorList>
            <person name="Billin A.N."/>
            <person name="Cockerill K.A."/>
            <person name="Poole S.J."/>
        </authorList>
    </citation>
    <scope>NUCLEOTIDE SEQUENCE [MRNA]</scope>
    <scope>FUNCTION</scope>
    <scope>DEVELOPMENTAL STAGE</scope>
    <source>
        <strain>Oregon-R</strain>
        <tissue>Embryo</tissue>
    </source>
</reference>
<reference key="2">
    <citation type="journal article" date="1991" name="Mech. Dev.">
        <title>Characterization of two Drosophila POU domain genes, related to oct-1 and oct-2, and the regulation of their expression patterns.</title>
        <authorList>
            <person name="Lloyd A."/>
            <person name="Sakonju S."/>
        </authorList>
    </citation>
    <scope>NUCLEOTIDE SEQUENCE [MRNA]</scope>
    <scope>FUNCTION</scope>
    <scope>TISSUE SPECIFICITY</scope>
    <scope>DEVELOPMENTAL STAGE</scope>
</reference>
<reference key="3">
    <citation type="journal article" date="1991" name="Proc. Natl. Acad. Sci. U.S.A.">
        <title>Two closely linked Drosophila POU domain genes are expressed in neuroblasts and sensory elements.</title>
        <authorList>
            <person name="Dick T."/>
            <person name="Yang X."/>
            <person name="Yeo S."/>
            <person name="Chia W."/>
        </authorList>
    </citation>
    <scope>NUCLEOTIDE SEQUENCE [MRNA]</scope>
    <scope>FUNCTION</scope>
    <scope>SUBCELLULAR LOCATION</scope>
    <scope>TISSUE SPECIFICITY</scope>
    <scope>DEVELOPMENTAL STAGE</scope>
    <source>
        <tissue>Embryo</tissue>
    </source>
</reference>
<reference key="4">
    <citation type="journal article" date="2000" name="Science">
        <title>The genome sequence of Drosophila melanogaster.</title>
        <authorList>
            <person name="Adams M.D."/>
            <person name="Celniker S.E."/>
            <person name="Holt R.A."/>
            <person name="Evans C.A."/>
            <person name="Gocayne J.D."/>
            <person name="Amanatides P.G."/>
            <person name="Scherer S.E."/>
            <person name="Li P.W."/>
            <person name="Hoskins R.A."/>
            <person name="Galle R.F."/>
            <person name="George R.A."/>
            <person name="Lewis S.E."/>
            <person name="Richards S."/>
            <person name="Ashburner M."/>
            <person name="Henderson S.N."/>
            <person name="Sutton G.G."/>
            <person name="Wortman J.R."/>
            <person name="Yandell M.D."/>
            <person name="Zhang Q."/>
            <person name="Chen L.X."/>
            <person name="Brandon R.C."/>
            <person name="Rogers Y.-H.C."/>
            <person name="Blazej R.G."/>
            <person name="Champe M."/>
            <person name="Pfeiffer B.D."/>
            <person name="Wan K.H."/>
            <person name="Doyle C."/>
            <person name="Baxter E.G."/>
            <person name="Helt G."/>
            <person name="Nelson C.R."/>
            <person name="Miklos G.L.G."/>
            <person name="Abril J.F."/>
            <person name="Agbayani A."/>
            <person name="An H.-J."/>
            <person name="Andrews-Pfannkoch C."/>
            <person name="Baldwin D."/>
            <person name="Ballew R.M."/>
            <person name="Basu A."/>
            <person name="Baxendale J."/>
            <person name="Bayraktaroglu L."/>
            <person name="Beasley E.M."/>
            <person name="Beeson K.Y."/>
            <person name="Benos P.V."/>
            <person name="Berman B.P."/>
            <person name="Bhandari D."/>
            <person name="Bolshakov S."/>
            <person name="Borkova D."/>
            <person name="Botchan M.R."/>
            <person name="Bouck J."/>
            <person name="Brokstein P."/>
            <person name="Brottier P."/>
            <person name="Burtis K.C."/>
            <person name="Busam D.A."/>
            <person name="Butler H."/>
            <person name="Cadieu E."/>
            <person name="Center A."/>
            <person name="Chandra I."/>
            <person name="Cherry J.M."/>
            <person name="Cawley S."/>
            <person name="Dahlke C."/>
            <person name="Davenport L.B."/>
            <person name="Davies P."/>
            <person name="de Pablos B."/>
            <person name="Delcher A."/>
            <person name="Deng Z."/>
            <person name="Mays A.D."/>
            <person name="Dew I."/>
            <person name="Dietz S.M."/>
            <person name="Dodson K."/>
            <person name="Doup L.E."/>
            <person name="Downes M."/>
            <person name="Dugan-Rocha S."/>
            <person name="Dunkov B.C."/>
            <person name="Dunn P."/>
            <person name="Durbin K.J."/>
            <person name="Evangelista C.C."/>
            <person name="Ferraz C."/>
            <person name="Ferriera S."/>
            <person name="Fleischmann W."/>
            <person name="Fosler C."/>
            <person name="Gabrielian A.E."/>
            <person name="Garg N.S."/>
            <person name="Gelbart W.M."/>
            <person name="Glasser K."/>
            <person name="Glodek A."/>
            <person name="Gong F."/>
            <person name="Gorrell J.H."/>
            <person name="Gu Z."/>
            <person name="Guan P."/>
            <person name="Harris M."/>
            <person name="Harris N.L."/>
            <person name="Harvey D.A."/>
            <person name="Heiman T.J."/>
            <person name="Hernandez J.R."/>
            <person name="Houck J."/>
            <person name="Hostin D."/>
            <person name="Houston K.A."/>
            <person name="Howland T.J."/>
            <person name="Wei M.-H."/>
            <person name="Ibegwam C."/>
            <person name="Jalali M."/>
            <person name="Kalush F."/>
            <person name="Karpen G.H."/>
            <person name="Ke Z."/>
            <person name="Kennison J.A."/>
            <person name="Ketchum K.A."/>
            <person name="Kimmel B.E."/>
            <person name="Kodira C.D."/>
            <person name="Kraft C.L."/>
            <person name="Kravitz S."/>
            <person name="Kulp D."/>
            <person name="Lai Z."/>
            <person name="Lasko P."/>
            <person name="Lei Y."/>
            <person name="Levitsky A.A."/>
            <person name="Li J.H."/>
            <person name="Li Z."/>
            <person name="Liang Y."/>
            <person name="Lin X."/>
            <person name="Liu X."/>
            <person name="Mattei B."/>
            <person name="McIntosh T.C."/>
            <person name="McLeod M.P."/>
            <person name="McPherson D."/>
            <person name="Merkulov G."/>
            <person name="Milshina N.V."/>
            <person name="Mobarry C."/>
            <person name="Morris J."/>
            <person name="Moshrefi A."/>
            <person name="Mount S.M."/>
            <person name="Moy M."/>
            <person name="Murphy B."/>
            <person name="Murphy L."/>
            <person name="Muzny D.M."/>
            <person name="Nelson D.L."/>
            <person name="Nelson D.R."/>
            <person name="Nelson K.A."/>
            <person name="Nixon K."/>
            <person name="Nusskern D.R."/>
            <person name="Pacleb J.M."/>
            <person name="Palazzolo M."/>
            <person name="Pittman G.S."/>
            <person name="Pan S."/>
            <person name="Pollard J."/>
            <person name="Puri V."/>
            <person name="Reese M.G."/>
            <person name="Reinert K."/>
            <person name="Remington K."/>
            <person name="Saunders R.D.C."/>
            <person name="Scheeler F."/>
            <person name="Shen H."/>
            <person name="Shue B.C."/>
            <person name="Siden-Kiamos I."/>
            <person name="Simpson M."/>
            <person name="Skupski M.P."/>
            <person name="Smith T.J."/>
            <person name="Spier E."/>
            <person name="Spradling A.C."/>
            <person name="Stapleton M."/>
            <person name="Strong R."/>
            <person name="Sun E."/>
            <person name="Svirskas R."/>
            <person name="Tector C."/>
            <person name="Turner R."/>
            <person name="Venter E."/>
            <person name="Wang A.H."/>
            <person name="Wang X."/>
            <person name="Wang Z.-Y."/>
            <person name="Wassarman D.A."/>
            <person name="Weinstock G.M."/>
            <person name="Weissenbach J."/>
            <person name="Williams S.M."/>
            <person name="Woodage T."/>
            <person name="Worley K.C."/>
            <person name="Wu D."/>
            <person name="Yang S."/>
            <person name="Yao Q.A."/>
            <person name="Ye J."/>
            <person name="Yeh R.-F."/>
            <person name="Zaveri J.S."/>
            <person name="Zhan M."/>
            <person name="Zhang G."/>
            <person name="Zhao Q."/>
            <person name="Zheng L."/>
            <person name="Zheng X.H."/>
            <person name="Zhong F.N."/>
            <person name="Zhong W."/>
            <person name="Zhou X."/>
            <person name="Zhu S.C."/>
            <person name="Zhu X."/>
            <person name="Smith H.O."/>
            <person name="Gibbs R.A."/>
            <person name="Myers E.W."/>
            <person name="Rubin G.M."/>
            <person name="Venter J.C."/>
        </authorList>
    </citation>
    <scope>NUCLEOTIDE SEQUENCE [LARGE SCALE GENOMIC DNA]</scope>
    <source>
        <strain>Berkeley</strain>
    </source>
</reference>
<reference key="5">
    <citation type="journal article" date="2002" name="Genome Biol.">
        <title>Annotation of the Drosophila melanogaster euchromatic genome: a systematic review.</title>
        <authorList>
            <person name="Misra S."/>
            <person name="Crosby M.A."/>
            <person name="Mungall C.J."/>
            <person name="Matthews B.B."/>
            <person name="Campbell K.S."/>
            <person name="Hradecky P."/>
            <person name="Huang Y."/>
            <person name="Kaminker J.S."/>
            <person name="Millburn G.H."/>
            <person name="Prochnik S.E."/>
            <person name="Smith C.D."/>
            <person name="Tupy J.L."/>
            <person name="Whitfield E.J."/>
            <person name="Bayraktaroglu L."/>
            <person name="Berman B.P."/>
            <person name="Bettencourt B.R."/>
            <person name="Celniker S.E."/>
            <person name="de Grey A.D.N.J."/>
            <person name="Drysdale R.A."/>
            <person name="Harris N.L."/>
            <person name="Richter J."/>
            <person name="Russo S."/>
            <person name="Schroeder A.J."/>
            <person name="Shu S.Q."/>
            <person name="Stapleton M."/>
            <person name="Yamada C."/>
            <person name="Ashburner M."/>
            <person name="Gelbart W.M."/>
            <person name="Rubin G.M."/>
            <person name="Lewis S.E."/>
        </authorList>
    </citation>
    <scope>GENOME REANNOTATION</scope>
    <source>
        <strain>Berkeley</strain>
    </source>
</reference>
<reference key="6">
    <citation type="journal article" date="2002" name="Genome Biol.">
        <title>A Drosophila full-length cDNA resource.</title>
        <authorList>
            <person name="Stapleton M."/>
            <person name="Carlson J.W."/>
            <person name="Brokstein P."/>
            <person name="Yu C."/>
            <person name="Champe M."/>
            <person name="George R.A."/>
            <person name="Guarin H."/>
            <person name="Kronmiller B."/>
            <person name="Pacleb J.M."/>
            <person name="Park S."/>
            <person name="Wan K.H."/>
            <person name="Rubin G.M."/>
            <person name="Celniker S.E."/>
        </authorList>
    </citation>
    <scope>NUCLEOTIDE SEQUENCE [LARGE SCALE MRNA]</scope>
    <source>
        <strain>Berkeley</strain>
        <tissue>Embryo</tissue>
    </source>
</reference>
<accession>P31368</accession>
<accession>Q9VK74</accession>
<dbReference type="EMBL" id="M81957">
    <property type="protein sequence ID" value="AAA28829.1"/>
    <property type="molecule type" value="mRNA"/>
</dbReference>
<dbReference type="EMBL" id="S80561">
    <property type="protein sequence ID" value="AAB21409.1"/>
    <property type="molecule type" value="mRNA"/>
</dbReference>
<dbReference type="EMBL" id="M65015">
    <property type="protein sequence ID" value="AAA28480.1"/>
    <property type="molecule type" value="mRNA"/>
</dbReference>
<dbReference type="EMBL" id="AE014134">
    <property type="protein sequence ID" value="AAF53205.2"/>
    <property type="molecule type" value="Genomic_DNA"/>
</dbReference>
<dbReference type="EMBL" id="AY118387">
    <property type="protein sequence ID" value="AAM48416.1"/>
    <property type="molecule type" value="mRNA"/>
</dbReference>
<dbReference type="PIR" id="B56564">
    <property type="entry name" value="B56564"/>
</dbReference>
<dbReference type="RefSeq" id="NP_001285876.1">
    <property type="nucleotide sequence ID" value="NM_001298947.1"/>
</dbReference>
<dbReference type="RefSeq" id="NP_476659.1">
    <property type="nucleotide sequence ID" value="NM_057311.5"/>
</dbReference>
<dbReference type="SMR" id="P31368"/>
<dbReference type="BioGRID" id="60715">
    <property type="interactions" value="34"/>
</dbReference>
<dbReference type="FunCoup" id="P31368">
    <property type="interactions" value="92"/>
</dbReference>
<dbReference type="IntAct" id="P31368">
    <property type="interactions" value="10"/>
</dbReference>
<dbReference type="STRING" id="7227.FBpp0111554"/>
<dbReference type="GlyGen" id="P31368">
    <property type="glycosylation" value="1 site"/>
</dbReference>
<dbReference type="PaxDb" id="7227-FBpp0111554"/>
<dbReference type="DNASU" id="34669"/>
<dbReference type="EnsemblMetazoa" id="FBtr0112643">
    <property type="protein sequence ID" value="FBpp0111555"/>
    <property type="gene ID" value="FBgn0085424"/>
</dbReference>
<dbReference type="EnsemblMetazoa" id="FBtr0342628">
    <property type="protein sequence ID" value="FBpp0309559"/>
    <property type="gene ID" value="FBgn0085424"/>
</dbReference>
<dbReference type="GeneID" id="34669"/>
<dbReference type="KEGG" id="dme:Dmel_CG34395"/>
<dbReference type="AGR" id="FB:FBgn0085424"/>
<dbReference type="CTD" id="34669"/>
<dbReference type="FlyBase" id="FBgn0085424">
    <property type="gene designation" value="nub"/>
</dbReference>
<dbReference type="VEuPathDB" id="VectorBase:FBgn0085424"/>
<dbReference type="eggNOG" id="KOG3802">
    <property type="taxonomic scope" value="Eukaryota"/>
</dbReference>
<dbReference type="HOGENOM" id="CLU_013065_7_1_1"/>
<dbReference type="InParanoid" id="P31368"/>
<dbReference type="OrthoDB" id="6358449at2759"/>
<dbReference type="PhylomeDB" id="P31368"/>
<dbReference type="Reactome" id="R-DME-6807505">
    <property type="pathway name" value="RNA polymerase II transcribes snRNA genes"/>
</dbReference>
<dbReference type="Reactome" id="R-DME-9018519">
    <property type="pathway name" value="Estrogen-dependent gene expression"/>
</dbReference>
<dbReference type="SignaLink" id="P31368"/>
<dbReference type="BioGRID-ORCS" id="34669">
    <property type="hits" value="0 hits in 3 CRISPR screens"/>
</dbReference>
<dbReference type="GenomeRNAi" id="34669"/>
<dbReference type="PRO" id="PR:P31368"/>
<dbReference type="Proteomes" id="UP000000803">
    <property type="component" value="Chromosome 2L"/>
</dbReference>
<dbReference type="Bgee" id="FBgn0085424">
    <property type="expression patterns" value="Expressed in adult differentiating enterocyte in digestive tract and 115 other cell types or tissues"/>
</dbReference>
<dbReference type="ExpressionAtlas" id="P31368">
    <property type="expression patterns" value="baseline and differential"/>
</dbReference>
<dbReference type="GO" id="GO:0005634">
    <property type="term" value="C:nucleus"/>
    <property type="evidence" value="ECO:0000314"/>
    <property type="project" value="FlyBase"/>
</dbReference>
<dbReference type="GO" id="GO:0001228">
    <property type="term" value="F:DNA-binding transcription activator activity, RNA polymerase II-specific"/>
    <property type="evidence" value="ECO:0000314"/>
    <property type="project" value="FlyBase"/>
</dbReference>
<dbReference type="GO" id="GO:0000981">
    <property type="term" value="F:DNA-binding transcription factor activity, RNA polymerase II-specific"/>
    <property type="evidence" value="ECO:0000318"/>
    <property type="project" value="GO_Central"/>
</dbReference>
<dbReference type="GO" id="GO:0000978">
    <property type="term" value="F:RNA polymerase II cis-regulatory region sequence-specific DNA binding"/>
    <property type="evidence" value="ECO:0000318"/>
    <property type="project" value="GO_Central"/>
</dbReference>
<dbReference type="GO" id="GO:0000976">
    <property type="term" value="F:transcription cis-regulatory region binding"/>
    <property type="evidence" value="ECO:0000314"/>
    <property type="project" value="FlyBase"/>
</dbReference>
<dbReference type="GO" id="GO:0035107">
    <property type="term" value="P:appendage morphogenesis"/>
    <property type="evidence" value="ECO:0000315"/>
    <property type="project" value="FlyBase"/>
</dbReference>
<dbReference type="GO" id="GO:0048813">
    <property type="term" value="P:dendrite morphogenesis"/>
    <property type="evidence" value="ECO:0000315"/>
    <property type="project" value="FlyBase"/>
</dbReference>
<dbReference type="GO" id="GO:0002809">
    <property type="term" value="P:negative regulation of antibacterial peptide biosynthetic process"/>
    <property type="evidence" value="ECO:0000315"/>
    <property type="project" value="FlyBase"/>
</dbReference>
<dbReference type="GO" id="GO:2000177">
    <property type="term" value="P:regulation of neural precursor cell proliferation"/>
    <property type="evidence" value="ECO:0000316"/>
    <property type="project" value="FlyBase"/>
</dbReference>
<dbReference type="GO" id="GO:0050767">
    <property type="term" value="P:regulation of neurogenesis"/>
    <property type="evidence" value="ECO:0000315"/>
    <property type="project" value="FlyBase"/>
</dbReference>
<dbReference type="GO" id="GO:0006357">
    <property type="term" value="P:regulation of transcription by RNA polymerase II"/>
    <property type="evidence" value="ECO:0000315"/>
    <property type="project" value="FlyBase"/>
</dbReference>
<dbReference type="CDD" id="cd00086">
    <property type="entry name" value="homeodomain"/>
    <property type="match status" value="1"/>
</dbReference>
<dbReference type="FunFam" id="1.10.10.60:FF:000005">
    <property type="entry name" value="POU domain protein"/>
    <property type="match status" value="1"/>
</dbReference>
<dbReference type="FunFam" id="1.10.260.40:FF:000001">
    <property type="entry name" value="POU domain protein"/>
    <property type="match status" value="1"/>
</dbReference>
<dbReference type="Gene3D" id="1.10.10.60">
    <property type="entry name" value="Homeodomain-like"/>
    <property type="match status" value="1"/>
</dbReference>
<dbReference type="Gene3D" id="1.10.260.40">
    <property type="entry name" value="lambda repressor-like DNA-binding domains"/>
    <property type="match status" value="1"/>
</dbReference>
<dbReference type="InterPro" id="IPR001356">
    <property type="entry name" value="HD"/>
</dbReference>
<dbReference type="InterPro" id="IPR017970">
    <property type="entry name" value="Homeobox_CS"/>
</dbReference>
<dbReference type="InterPro" id="IPR009057">
    <property type="entry name" value="Homeodomain-like_sf"/>
</dbReference>
<dbReference type="InterPro" id="IPR010982">
    <property type="entry name" value="Lambda_DNA-bd_dom_sf"/>
</dbReference>
<dbReference type="InterPro" id="IPR013847">
    <property type="entry name" value="POU"/>
</dbReference>
<dbReference type="InterPro" id="IPR000327">
    <property type="entry name" value="POU_dom"/>
</dbReference>
<dbReference type="InterPro" id="IPR050255">
    <property type="entry name" value="POU_domain_TF"/>
</dbReference>
<dbReference type="PANTHER" id="PTHR11636">
    <property type="entry name" value="POU DOMAIN"/>
    <property type="match status" value="1"/>
</dbReference>
<dbReference type="PANTHER" id="PTHR11636:SF76">
    <property type="entry name" value="PROTEIN NUBBIN"/>
    <property type="match status" value="1"/>
</dbReference>
<dbReference type="Pfam" id="PF00046">
    <property type="entry name" value="Homeodomain"/>
    <property type="match status" value="1"/>
</dbReference>
<dbReference type="Pfam" id="PF00157">
    <property type="entry name" value="Pou"/>
    <property type="match status" value="1"/>
</dbReference>
<dbReference type="PRINTS" id="PR00028">
    <property type="entry name" value="POUDOMAIN"/>
</dbReference>
<dbReference type="SMART" id="SM00389">
    <property type="entry name" value="HOX"/>
    <property type="match status" value="1"/>
</dbReference>
<dbReference type="SMART" id="SM00352">
    <property type="entry name" value="POU"/>
    <property type="match status" value="1"/>
</dbReference>
<dbReference type="SUPFAM" id="SSF46689">
    <property type="entry name" value="Homeodomain-like"/>
    <property type="match status" value="1"/>
</dbReference>
<dbReference type="SUPFAM" id="SSF47413">
    <property type="entry name" value="lambda repressor-like DNA-binding domains"/>
    <property type="match status" value="1"/>
</dbReference>
<dbReference type="PROSITE" id="PS00027">
    <property type="entry name" value="HOMEOBOX_1"/>
    <property type="match status" value="1"/>
</dbReference>
<dbReference type="PROSITE" id="PS50071">
    <property type="entry name" value="HOMEOBOX_2"/>
    <property type="match status" value="1"/>
</dbReference>
<dbReference type="PROSITE" id="PS00035">
    <property type="entry name" value="POU_1"/>
    <property type="match status" value="1"/>
</dbReference>
<dbReference type="PROSITE" id="PS00465">
    <property type="entry name" value="POU_2"/>
    <property type="match status" value="1"/>
</dbReference>
<dbReference type="PROSITE" id="PS51179">
    <property type="entry name" value="POU_3"/>
    <property type="match status" value="1"/>
</dbReference>
<proteinExistence type="evidence at transcript level"/>